<comment type="function">
    <text evidence="1">Binds to DNA and alters its conformation. May be involved in regulation of gene expression, nucleoid organization and DNA protection.</text>
</comment>
<comment type="subunit">
    <text evidence="1">Homodimer.</text>
</comment>
<comment type="subcellular location">
    <subcellularLocation>
        <location evidence="1">Cytoplasm</location>
        <location evidence="1">Nucleoid</location>
    </subcellularLocation>
</comment>
<comment type="similarity">
    <text evidence="1">Belongs to the YbaB/EbfC family.</text>
</comment>
<name>Y1216_XYLFM</name>
<accession>B0U2T5</accession>
<protein>
    <recommendedName>
        <fullName evidence="1">Nucleoid-associated protein Xfasm12_1216</fullName>
    </recommendedName>
</protein>
<proteinExistence type="inferred from homology"/>
<gene>
    <name type="ordered locus">Xfasm12_1216</name>
</gene>
<reference key="1">
    <citation type="journal article" date="2010" name="J. Bacteriol.">
        <title>Whole genome sequences of two Xylella fastidiosa strains (M12 and M23) causing almond leaf scorch disease in California.</title>
        <authorList>
            <person name="Chen J."/>
            <person name="Xie G."/>
            <person name="Han S."/>
            <person name="Chertkov O."/>
            <person name="Sims D."/>
            <person name="Civerolo E.L."/>
        </authorList>
    </citation>
    <scope>NUCLEOTIDE SEQUENCE [LARGE SCALE GENOMIC DNA]</scope>
    <source>
        <strain>M12</strain>
    </source>
</reference>
<feature type="chain" id="PRO_1000114665" description="Nucleoid-associated protein Xfasm12_1216">
    <location>
        <begin position="1"/>
        <end position="107"/>
    </location>
</feature>
<dbReference type="EMBL" id="CP000941">
    <property type="protein sequence ID" value="ACA12164.1"/>
    <property type="molecule type" value="Genomic_DNA"/>
</dbReference>
<dbReference type="SMR" id="B0U2T5"/>
<dbReference type="KEGG" id="xfm:Xfasm12_1216"/>
<dbReference type="HOGENOM" id="CLU_140930_0_0_6"/>
<dbReference type="GO" id="GO:0043590">
    <property type="term" value="C:bacterial nucleoid"/>
    <property type="evidence" value="ECO:0007669"/>
    <property type="project" value="UniProtKB-UniRule"/>
</dbReference>
<dbReference type="GO" id="GO:0005829">
    <property type="term" value="C:cytosol"/>
    <property type="evidence" value="ECO:0007669"/>
    <property type="project" value="TreeGrafter"/>
</dbReference>
<dbReference type="GO" id="GO:0003677">
    <property type="term" value="F:DNA binding"/>
    <property type="evidence" value="ECO:0007669"/>
    <property type="project" value="UniProtKB-UniRule"/>
</dbReference>
<dbReference type="FunFam" id="3.30.1310.10:FF:000001">
    <property type="entry name" value="Nucleoid-associated protein YbaB"/>
    <property type="match status" value="1"/>
</dbReference>
<dbReference type="Gene3D" id="3.30.1310.10">
    <property type="entry name" value="Nucleoid-associated protein YbaB-like domain"/>
    <property type="match status" value="1"/>
</dbReference>
<dbReference type="HAMAP" id="MF_00274">
    <property type="entry name" value="DNA_YbaB_EbfC"/>
    <property type="match status" value="1"/>
</dbReference>
<dbReference type="InterPro" id="IPR036894">
    <property type="entry name" value="YbaB-like_sf"/>
</dbReference>
<dbReference type="InterPro" id="IPR004401">
    <property type="entry name" value="YbaB/EbfC"/>
</dbReference>
<dbReference type="NCBIfam" id="TIGR00103">
    <property type="entry name" value="DNA_YbaB_EbfC"/>
    <property type="match status" value="1"/>
</dbReference>
<dbReference type="PANTHER" id="PTHR33449">
    <property type="entry name" value="NUCLEOID-ASSOCIATED PROTEIN YBAB"/>
    <property type="match status" value="1"/>
</dbReference>
<dbReference type="PANTHER" id="PTHR33449:SF1">
    <property type="entry name" value="NUCLEOID-ASSOCIATED PROTEIN YBAB"/>
    <property type="match status" value="1"/>
</dbReference>
<dbReference type="Pfam" id="PF02575">
    <property type="entry name" value="YbaB_DNA_bd"/>
    <property type="match status" value="1"/>
</dbReference>
<dbReference type="PIRSF" id="PIRSF004555">
    <property type="entry name" value="UCP004555"/>
    <property type="match status" value="1"/>
</dbReference>
<dbReference type="SUPFAM" id="SSF82607">
    <property type="entry name" value="YbaB-like"/>
    <property type="match status" value="1"/>
</dbReference>
<evidence type="ECO:0000255" key="1">
    <source>
        <dbReference type="HAMAP-Rule" id="MF_00274"/>
    </source>
</evidence>
<organism>
    <name type="scientific">Xylella fastidiosa (strain M12)</name>
    <dbReference type="NCBI Taxonomy" id="405440"/>
    <lineage>
        <taxon>Bacteria</taxon>
        <taxon>Pseudomonadati</taxon>
        <taxon>Pseudomonadota</taxon>
        <taxon>Gammaproteobacteria</taxon>
        <taxon>Lysobacterales</taxon>
        <taxon>Lysobacteraceae</taxon>
        <taxon>Xylella</taxon>
    </lineage>
</organism>
<keyword id="KW-0963">Cytoplasm</keyword>
<keyword id="KW-0238">DNA-binding</keyword>
<sequence>MMRGNIAQLMQQAQKMQENLQRAQEELAKLEVTGSAGGSMVSVILSGTKECRKVRIDPSILNDQEMIEDLIAAAFNDASNKVDAESKERMGSATLGMSLPPGFKLPF</sequence>